<feature type="chain" id="PRO_0000110615" description="Glutaminase">
    <location>
        <begin position="1"/>
        <end position="308"/>
    </location>
</feature>
<feature type="binding site" evidence="1">
    <location>
        <position position="66"/>
    </location>
    <ligand>
        <name>substrate</name>
    </ligand>
</feature>
<feature type="binding site" evidence="1">
    <location>
        <position position="117"/>
    </location>
    <ligand>
        <name>substrate</name>
    </ligand>
</feature>
<feature type="binding site" evidence="1">
    <location>
        <position position="161"/>
    </location>
    <ligand>
        <name>substrate</name>
    </ligand>
</feature>
<feature type="binding site" evidence="1">
    <location>
        <position position="168"/>
    </location>
    <ligand>
        <name>substrate</name>
    </ligand>
</feature>
<feature type="binding site" evidence="1">
    <location>
        <position position="192"/>
    </location>
    <ligand>
        <name>substrate</name>
    </ligand>
</feature>
<feature type="binding site" evidence="1">
    <location>
        <position position="244"/>
    </location>
    <ligand>
        <name>substrate</name>
    </ligand>
</feature>
<feature type="binding site" evidence="1">
    <location>
        <position position="262"/>
    </location>
    <ligand>
        <name>substrate</name>
    </ligand>
</feature>
<comment type="catalytic activity">
    <reaction evidence="1">
        <text>L-glutamine + H2O = L-glutamate + NH4(+)</text>
        <dbReference type="Rhea" id="RHEA:15889"/>
        <dbReference type="ChEBI" id="CHEBI:15377"/>
        <dbReference type="ChEBI" id="CHEBI:28938"/>
        <dbReference type="ChEBI" id="CHEBI:29985"/>
        <dbReference type="ChEBI" id="CHEBI:58359"/>
        <dbReference type="EC" id="3.5.1.2"/>
    </reaction>
</comment>
<comment type="subunit">
    <text evidence="1">Homotetramer.</text>
</comment>
<comment type="similarity">
    <text evidence="1">Belongs to the glutaminase family.</text>
</comment>
<name>GLSA_PHOLL</name>
<evidence type="ECO:0000255" key="1">
    <source>
        <dbReference type="HAMAP-Rule" id="MF_00313"/>
    </source>
</evidence>
<accession>Q7N7H7</accession>
<keyword id="KW-0378">Hydrolase</keyword>
<keyword id="KW-1185">Reference proteome</keyword>
<gene>
    <name evidence="1" type="primary">glsA</name>
    <name type="ordered locus">plu1172</name>
</gene>
<reference key="1">
    <citation type="journal article" date="2003" name="Nat. Biotechnol.">
        <title>The genome sequence of the entomopathogenic bacterium Photorhabdus luminescens.</title>
        <authorList>
            <person name="Duchaud E."/>
            <person name="Rusniok C."/>
            <person name="Frangeul L."/>
            <person name="Buchrieser C."/>
            <person name="Givaudan A."/>
            <person name="Taourit S."/>
            <person name="Bocs S."/>
            <person name="Boursaux-Eude C."/>
            <person name="Chandler M."/>
            <person name="Charles J.-F."/>
            <person name="Dassa E."/>
            <person name="Derose R."/>
            <person name="Derzelle S."/>
            <person name="Freyssinet G."/>
            <person name="Gaudriault S."/>
            <person name="Medigue C."/>
            <person name="Lanois A."/>
            <person name="Powell K."/>
            <person name="Siguier P."/>
            <person name="Vincent R."/>
            <person name="Wingate V."/>
            <person name="Zouine M."/>
            <person name="Glaser P."/>
            <person name="Boemare N."/>
            <person name="Danchin A."/>
            <person name="Kunst F."/>
        </authorList>
    </citation>
    <scope>NUCLEOTIDE SEQUENCE [LARGE SCALE GENOMIC DNA]</scope>
    <source>
        <strain>DSM 15139 / CIP 105565 / TT01</strain>
    </source>
</reference>
<proteinExistence type="inferred from homology"/>
<sequence length="308" mass="33697">MSTTFSNTLLSDILRQVRPLIGQGKVANYIPALAEVPADNLAIAICTIDGQIFHAGDAEKRFSIQSISKILSLTLAMTRYQEQEIWQRVGQEPSGQPFNSLVQLELEKGKPRNPFVNAGALIVCDMLQSRLSAPKQRMLEVVRKLAGCPDICYDSKVARSEMEHSHRNAAIAYLMKSFGNFDNDVLAVLQTYFHYCALKMNCIELAKCFIYLANQGSTIGSEQQILSPRQARQINALMMTCGMYDGSGEFAFRIGMPGKSGVGGGIVCVVPGEFTVTVWSPELDRSGNSLAGCAALELLADRVGRSVF</sequence>
<organism>
    <name type="scientific">Photorhabdus laumondii subsp. laumondii (strain DSM 15139 / CIP 105565 / TT01)</name>
    <name type="common">Photorhabdus luminescens subsp. laumondii</name>
    <dbReference type="NCBI Taxonomy" id="243265"/>
    <lineage>
        <taxon>Bacteria</taxon>
        <taxon>Pseudomonadati</taxon>
        <taxon>Pseudomonadota</taxon>
        <taxon>Gammaproteobacteria</taxon>
        <taxon>Enterobacterales</taxon>
        <taxon>Morganellaceae</taxon>
        <taxon>Photorhabdus</taxon>
    </lineage>
</organism>
<dbReference type="EC" id="3.5.1.2" evidence="1"/>
<dbReference type="EMBL" id="BX571862">
    <property type="protein sequence ID" value="CAE13466.1"/>
    <property type="molecule type" value="Genomic_DNA"/>
</dbReference>
<dbReference type="RefSeq" id="WP_011145499.1">
    <property type="nucleotide sequence ID" value="NC_005126.1"/>
</dbReference>
<dbReference type="SMR" id="Q7N7H7"/>
<dbReference type="STRING" id="243265.plu1172"/>
<dbReference type="GeneID" id="48847442"/>
<dbReference type="KEGG" id="plu:plu1172"/>
<dbReference type="eggNOG" id="COG2066">
    <property type="taxonomic scope" value="Bacteria"/>
</dbReference>
<dbReference type="HOGENOM" id="CLU_027932_1_1_6"/>
<dbReference type="OrthoDB" id="9788822at2"/>
<dbReference type="Proteomes" id="UP000002514">
    <property type="component" value="Chromosome"/>
</dbReference>
<dbReference type="GO" id="GO:0004359">
    <property type="term" value="F:glutaminase activity"/>
    <property type="evidence" value="ECO:0007669"/>
    <property type="project" value="UniProtKB-UniRule"/>
</dbReference>
<dbReference type="GO" id="GO:0006537">
    <property type="term" value="P:glutamate biosynthetic process"/>
    <property type="evidence" value="ECO:0007669"/>
    <property type="project" value="TreeGrafter"/>
</dbReference>
<dbReference type="GO" id="GO:0006543">
    <property type="term" value="P:glutamine catabolic process"/>
    <property type="evidence" value="ECO:0007669"/>
    <property type="project" value="TreeGrafter"/>
</dbReference>
<dbReference type="FunFam" id="3.40.710.10:FF:000005">
    <property type="entry name" value="Glutaminase"/>
    <property type="match status" value="1"/>
</dbReference>
<dbReference type="Gene3D" id="3.40.710.10">
    <property type="entry name" value="DD-peptidase/beta-lactamase superfamily"/>
    <property type="match status" value="1"/>
</dbReference>
<dbReference type="HAMAP" id="MF_00313">
    <property type="entry name" value="Glutaminase"/>
    <property type="match status" value="1"/>
</dbReference>
<dbReference type="InterPro" id="IPR012338">
    <property type="entry name" value="Beta-lactam/transpept-like"/>
</dbReference>
<dbReference type="InterPro" id="IPR015868">
    <property type="entry name" value="Glutaminase"/>
</dbReference>
<dbReference type="NCBIfam" id="TIGR03814">
    <property type="entry name" value="Gln_ase"/>
    <property type="match status" value="1"/>
</dbReference>
<dbReference type="NCBIfam" id="NF002132">
    <property type="entry name" value="PRK00971.1-1"/>
    <property type="match status" value="1"/>
</dbReference>
<dbReference type="NCBIfam" id="NF002133">
    <property type="entry name" value="PRK00971.1-2"/>
    <property type="match status" value="1"/>
</dbReference>
<dbReference type="PANTHER" id="PTHR12544">
    <property type="entry name" value="GLUTAMINASE"/>
    <property type="match status" value="1"/>
</dbReference>
<dbReference type="PANTHER" id="PTHR12544:SF29">
    <property type="entry name" value="GLUTAMINASE"/>
    <property type="match status" value="1"/>
</dbReference>
<dbReference type="Pfam" id="PF04960">
    <property type="entry name" value="Glutaminase"/>
    <property type="match status" value="1"/>
</dbReference>
<dbReference type="SUPFAM" id="SSF56601">
    <property type="entry name" value="beta-lactamase/transpeptidase-like"/>
    <property type="match status" value="1"/>
</dbReference>
<protein>
    <recommendedName>
        <fullName evidence="1">Glutaminase</fullName>
        <ecNumber evidence="1">3.5.1.2</ecNumber>
    </recommendedName>
</protein>